<comment type="function">
    <text evidence="2 15">Occurs in almost all aerobically respiring organisms and serves to protect cells from the toxic effects of hydrogen peroxide (By similarity). Involved in environmental stress response. Promotes drought stress tolerance and recovery (Ref.10).</text>
</comment>
<comment type="catalytic activity">
    <reaction evidence="4 7">
        <text>2 H2O2 = O2 + 2 H2O</text>
        <dbReference type="Rhea" id="RHEA:20309"/>
        <dbReference type="ChEBI" id="CHEBI:15377"/>
        <dbReference type="ChEBI" id="CHEBI:15379"/>
        <dbReference type="ChEBI" id="CHEBI:16240"/>
        <dbReference type="EC" id="1.11.1.6"/>
    </reaction>
</comment>
<comment type="cofactor">
    <cofactor evidence="3">
        <name>heme</name>
        <dbReference type="ChEBI" id="CHEBI:30413"/>
    </cofactor>
</comment>
<comment type="activity regulation">
    <text evidence="7">Strongly inhibited by beta-mercaptoethanol, sodium azide and potassium cyanide. Slightly repressed by 3-amino-1,2,4-triazole (3-AT). Activity is repressed proportionally to increased concentration of NaCl, KCl and MgCl(2), and, to a lower extent, of LiCl.</text>
</comment>
<comment type="biophysicochemical properties">
    <kinetics>
        <KM evidence="7">80 mM for H(2)O(2) (at pH 7.5)</KM>
        <Vmax evidence="7">0.33 umol/min/g enzyme (at pH 7.5)</Vmax>
        <text evidence="7">kcat is 6.6 min(-1) with H(2)O(2) as substrate (at pH 7.5).</text>
    </kinetics>
    <phDependence>
        <text evidence="7">Optimum pH is 8.</text>
    </phDependence>
    <temperatureDependence>
        <text evidence="7">Optimum temperature is 30 degrees Celsius.</text>
    </temperatureDependence>
</comment>
<comment type="subunit">
    <text evidence="3 14">Homotetramer (By similarity). Interacts with STRK1 at the plasma membrane (PubMed:29581216).</text>
</comment>
<comment type="subcellular location">
    <subcellularLocation>
        <location evidence="10 17">Cytoplasm</location>
    </subcellularLocation>
    <subcellularLocation>
        <location evidence="14">Cell membrane</location>
    </subcellularLocation>
</comment>
<comment type="tissue specificity">
    <text evidence="6 7 8 10 12 13 15">Mostly expressed in young leaves (blades and sheaths) and seeds (PubMed:21398647, PubMed:21979082, PubMed:22106097, PubMed:26900141, PubMed:28969789, PubMed:29464319, Ref.10). Abundant in leaf sheath and moderately expressed in leaf blade and root (PubMed:21398647, PubMed:22106097, PubMed:29464319). Also present at a high levels in panicles, but barely in culms (PubMed:22106097, Ref.10). Observed in stems and anthers (PubMed:29464319).</text>
</comment>
<comment type="induction">
    <text evidence="6 9 11 13 15">Abundance in leaves follows a photoperiod-dependent circadian rhythm with an oscillating expression pattern peaking late in the light period (PubMed:21398647, Ref.10). Inhibited by water stress (PubMed:21398647). Repressed by abscisic acid (ABA), drought, high salinity (NaCl) and hydrogen peroxide (H(2)O(2)) treatments (Ref.10). Triggered by zinc oxide nanoparticles (ZnO NPs); this induction is reversed by sodium nitroprusside (SNP, a NO donor) (PubMed:25958266). Accumulates upon infection by the bacterial blight agent X.oryzae pv. Oryzae (Xoo) strain PXO99 (PubMed:27185545). Influenced by heat stress (HS); up-regulated in conditions 35 degrees Celsius day / 27 degrees Celsius night, but repressed in conditions 38 degrees Celsius day / 30 degrees Celsius night (PubMed:29464319).</text>
</comment>
<comment type="similarity">
    <text evidence="16">Belongs to the catalase family.</text>
</comment>
<comment type="sequence caution" evidence="16">
    <conflict type="erroneous gene model prediction">
        <sequence resource="EMBL-CDS" id="EAZ21490"/>
    </conflict>
</comment>
<dbReference type="EC" id="1.11.1.6" evidence="4 7"/>
<dbReference type="EMBL" id="D29966">
    <property type="protein sequence ID" value="BAA06232.1"/>
    <property type="molecule type" value="Genomic_DNA"/>
</dbReference>
<dbReference type="EMBL" id="AP004121">
    <property type="protein sequence ID" value="BAD07711.1"/>
    <property type="molecule type" value="Genomic_DNA"/>
</dbReference>
<dbReference type="EMBL" id="AP004867">
    <property type="protein sequence ID" value="BAD07936.1"/>
    <property type="molecule type" value="Genomic_DNA"/>
</dbReference>
<dbReference type="EMBL" id="AP008208">
    <property type="protein sequence ID" value="BAF07587.1"/>
    <property type="molecule type" value="Genomic_DNA"/>
</dbReference>
<dbReference type="EMBL" id="AP014958">
    <property type="protein sequence ID" value="BAS76647.1"/>
    <property type="molecule type" value="Genomic_DNA"/>
</dbReference>
<dbReference type="EMBL" id="CM000139">
    <property type="protein sequence ID" value="EAZ21490.1"/>
    <property type="status" value="ALT_SEQ"/>
    <property type="molecule type" value="Genomic_DNA"/>
</dbReference>
<dbReference type="EMBL" id="AK065094">
    <property type="status" value="NOT_ANNOTATED_CDS"/>
    <property type="molecule type" value="mRNA"/>
</dbReference>
<dbReference type="EMBL" id="AK099923">
    <property type="status" value="NOT_ANNOTATED_CDS"/>
    <property type="molecule type" value="mRNA"/>
</dbReference>
<dbReference type="RefSeq" id="XP_015625395.1">
    <property type="nucleotide sequence ID" value="XM_015769909.1"/>
</dbReference>
<dbReference type="SMR" id="Q0E4K1"/>
<dbReference type="FunCoup" id="Q0E4K1">
    <property type="interactions" value="1900"/>
</dbReference>
<dbReference type="STRING" id="39947.Q0E4K1"/>
<dbReference type="PeroxiBase" id="5146">
    <property type="entry name" value="OsKat01"/>
</dbReference>
<dbReference type="PaxDb" id="39947-Q0E4K1"/>
<dbReference type="EnsemblPlants" id="Os02t0115700-01">
    <property type="protein sequence ID" value="Os02t0115700-01"/>
    <property type="gene ID" value="Os02g0115700"/>
</dbReference>
<dbReference type="Gramene" id="Os02t0115700-01">
    <property type="protein sequence ID" value="Os02t0115700-01"/>
    <property type="gene ID" value="Os02g0115700"/>
</dbReference>
<dbReference type="KEGG" id="dosa:Os02g0115700"/>
<dbReference type="eggNOG" id="KOG0047">
    <property type="taxonomic scope" value="Eukaryota"/>
</dbReference>
<dbReference type="HOGENOM" id="CLU_010645_4_0_1"/>
<dbReference type="InParanoid" id="Q0E4K1"/>
<dbReference type="OMA" id="QERMVWH"/>
<dbReference type="OrthoDB" id="6880011at2759"/>
<dbReference type="Proteomes" id="UP000000763">
    <property type="component" value="Chromosome 2"/>
</dbReference>
<dbReference type="Proteomes" id="UP000007752">
    <property type="component" value="Chromosome 2"/>
</dbReference>
<dbReference type="Proteomes" id="UP000059680">
    <property type="component" value="Chromosome 2"/>
</dbReference>
<dbReference type="ExpressionAtlas" id="Q0E4K1">
    <property type="expression patterns" value="baseline and differential"/>
</dbReference>
<dbReference type="GO" id="GO:0005737">
    <property type="term" value="C:cytoplasm"/>
    <property type="evidence" value="ECO:0000314"/>
    <property type="project" value="UniProtKB"/>
</dbReference>
<dbReference type="GO" id="GO:0005777">
    <property type="term" value="C:peroxisome"/>
    <property type="evidence" value="ECO:0000318"/>
    <property type="project" value="GO_Central"/>
</dbReference>
<dbReference type="GO" id="GO:0005886">
    <property type="term" value="C:plasma membrane"/>
    <property type="evidence" value="ECO:0000314"/>
    <property type="project" value="UniProtKB"/>
</dbReference>
<dbReference type="GO" id="GO:0004096">
    <property type="term" value="F:catalase activity"/>
    <property type="evidence" value="ECO:0000314"/>
    <property type="project" value="UniProtKB"/>
</dbReference>
<dbReference type="GO" id="GO:0020037">
    <property type="term" value="F:heme binding"/>
    <property type="evidence" value="ECO:0000318"/>
    <property type="project" value="GO_Central"/>
</dbReference>
<dbReference type="GO" id="GO:0046872">
    <property type="term" value="F:metal ion binding"/>
    <property type="evidence" value="ECO:0007669"/>
    <property type="project" value="UniProtKB-KW"/>
</dbReference>
<dbReference type="GO" id="GO:0007623">
    <property type="term" value="P:circadian rhythm"/>
    <property type="evidence" value="ECO:0000270"/>
    <property type="project" value="UniProtKB"/>
</dbReference>
<dbReference type="GO" id="GO:0042744">
    <property type="term" value="P:hydrogen peroxide catabolic process"/>
    <property type="evidence" value="ECO:0000318"/>
    <property type="project" value="GO_Central"/>
</dbReference>
<dbReference type="GO" id="GO:0009737">
    <property type="term" value="P:response to abscisic acid"/>
    <property type="evidence" value="ECO:0000270"/>
    <property type="project" value="UniProtKB"/>
</dbReference>
<dbReference type="GO" id="GO:0009617">
    <property type="term" value="P:response to bacterium"/>
    <property type="evidence" value="ECO:0000270"/>
    <property type="project" value="UniProtKB"/>
</dbReference>
<dbReference type="GO" id="GO:0009408">
    <property type="term" value="P:response to heat"/>
    <property type="evidence" value="ECO:0000270"/>
    <property type="project" value="UniProtKB"/>
</dbReference>
<dbReference type="GO" id="GO:0042542">
    <property type="term" value="P:response to hydrogen peroxide"/>
    <property type="evidence" value="ECO:0000270"/>
    <property type="project" value="UniProtKB"/>
</dbReference>
<dbReference type="GO" id="GO:0009416">
    <property type="term" value="P:response to light stimulus"/>
    <property type="evidence" value="ECO:0000270"/>
    <property type="project" value="UniProtKB"/>
</dbReference>
<dbReference type="GO" id="GO:1902074">
    <property type="term" value="P:response to salt"/>
    <property type="evidence" value="ECO:0000270"/>
    <property type="project" value="UniProtKB"/>
</dbReference>
<dbReference type="GO" id="GO:0009414">
    <property type="term" value="P:response to water deprivation"/>
    <property type="evidence" value="ECO:0000270"/>
    <property type="project" value="UniProtKB"/>
</dbReference>
<dbReference type="CDD" id="cd08154">
    <property type="entry name" value="catalase_clade_1"/>
    <property type="match status" value="1"/>
</dbReference>
<dbReference type="FunFam" id="2.40.180.10:FF:000002">
    <property type="entry name" value="Catalase"/>
    <property type="match status" value="1"/>
</dbReference>
<dbReference type="Gene3D" id="2.40.180.10">
    <property type="entry name" value="Catalase core domain"/>
    <property type="match status" value="1"/>
</dbReference>
<dbReference type="InterPro" id="IPR018028">
    <property type="entry name" value="Catalase"/>
</dbReference>
<dbReference type="InterPro" id="IPR024708">
    <property type="entry name" value="Catalase_AS"/>
</dbReference>
<dbReference type="InterPro" id="IPR024711">
    <property type="entry name" value="Catalase_clade1/3"/>
</dbReference>
<dbReference type="InterPro" id="IPR011614">
    <property type="entry name" value="Catalase_core"/>
</dbReference>
<dbReference type="InterPro" id="IPR002226">
    <property type="entry name" value="Catalase_haem_BS"/>
</dbReference>
<dbReference type="InterPro" id="IPR010582">
    <property type="entry name" value="Catalase_immune_responsive"/>
</dbReference>
<dbReference type="InterPro" id="IPR020835">
    <property type="entry name" value="Catalase_sf"/>
</dbReference>
<dbReference type="PANTHER" id="PTHR11465">
    <property type="entry name" value="CATALASE"/>
    <property type="match status" value="1"/>
</dbReference>
<dbReference type="PANTHER" id="PTHR11465:SF45">
    <property type="entry name" value="CATALASE ISOZYME A"/>
    <property type="match status" value="1"/>
</dbReference>
<dbReference type="Pfam" id="PF00199">
    <property type="entry name" value="Catalase"/>
    <property type="match status" value="1"/>
</dbReference>
<dbReference type="Pfam" id="PF06628">
    <property type="entry name" value="Catalase-rel"/>
    <property type="match status" value="1"/>
</dbReference>
<dbReference type="PIRSF" id="PIRSF038928">
    <property type="entry name" value="Catalase_clade1-3"/>
    <property type="match status" value="1"/>
</dbReference>
<dbReference type="PRINTS" id="PR00067">
    <property type="entry name" value="CATALASE"/>
</dbReference>
<dbReference type="SMART" id="SM01060">
    <property type="entry name" value="Catalase"/>
    <property type="match status" value="1"/>
</dbReference>
<dbReference type="SUPFAM" id="SSF56634">
    <property type="entry name" value="Heme-dependent catalase-like"/>
    <property type="match status" value="1"/>
</dbReference>
<dbReference type="PROSITE" id="PS00437">
    <property type="entry name" value="CATALASE_1"/>
    <property type="match status" value="1"/>
</dbReference>
<dbReference type="PROSITE" id="PS00438">
    <property type="entry name" value="CATALASE_2"/>
    <property type="match status" value="1"/>
</dbReference>
<dbReference type="PROSITE" id="PS51402">
    <property type="entry name" value="CATALASE_3"/>
    <property type="match status" value="1"/>
</dbReference>
<gene>
    <name type="primary">CATA</name>
    <name type="ordered locus">Os02g0115700</name>
    <name type="ordered locus">LOC_Os02g02400</name>
    <name type="ORF">OJ1442_E05.8-1</name>
    <name type="ORF">OsJ_004973</name>
    <name type="ORF">P0036E06.27-1</name>
</gene>
<name>CATA1_ORYSJ</name>
<protein>
    <recommendedName>
        <fullName>Catalase isozyme A</fullName>
        <shortName>CAT-A</shortName>
        <ecNumber evidence="4 7">1.11.1.6</ecNumber>
    </recommendedName>
</protein>
<keyword id="KW-1003">Cell membrane</keyword>
<keyword id="KW-0963">Cytoplasm</keyword>
<keyword id="KW-0349">Heme</keyword>
<keyword id="KW-0376">Hydrogen peroxide</keyword>
<keyword id="KW-0408">Iron</keyword>
<keyword id="KW-0472">Membrane</keyword>
<keyword id="KW-0479">Metal-binding</keyword>
<keyword id="KW-0560">Oxidoreductase</keyword>
<keyword id="KW-0575">Peroxidase</keyword>
<keyword id="KW-0597">Phosphoprotein</keyword>
<keyword id="KW-1185">Reference proteome</keyword>
<keyword id="KW-0346">Stress response</keyword>
<reference key="1">
    <citation type="journal article" date="1996" name="Plant Mol. Biol.">
        <title>Cloning and characterization of the rice CatA catalase gene, a homologue of the maize Cat3 gene.</title>
        <authorList>
            <person name="Higo K."/>
            <person name="Higo H."/>
        </authorList>
    </citation>
    <scope>NUCLEOTIDE SEQUENCE [GENOMIC DNA]</scope>
    <source>
        <tissue>Leaf</tissue>
    </source>
</reference>
<reference key="2">
    <citation type="journal article" date="2005" name="Nature">
        <title>The map-based sequence of the rice genome.</title>
        <authorList>
            <consortium name="International rice genome sequencing project (IRGSP)"/>
        </authorList>
    </citation>
    <scope>NUCLEOTIDE SEQUENCE [LARGE SCALE GENOMIC DNA]</scope>
    <source>
        <strain>cv. Nipponbare</strain>
    </source>
</reference>
<reference key="3">
    <citation type="journal article" date="2008" name="Nucleic Acids Res.">
        <title>The rice annotation project database (RAP-DB): 2008 update.</title>
        <authorList>
            <consortium name="The rice annotation project (RAP)"/>
        </authorList>
    </citation>
    <scope>GENOME REANNOTATION</scope>
    <source>
        <strain>cv. Nipponbare</strain>
    </source>
</reference>
<reference key="4">
    <citation type="journal article" date="2013" name="Rice">
        <title>Improvement of the Oryza sativa Nipponbare reference genome using next generation sequence and optical map data.</title>
        <authorList>
            <person name="Kawahara Y."/>
            <person name="de la Bastide M."/>
            <person name="Hamilton J.P."/>
            <person name="Kanamori H."/>
            <person name="McCombie W.R."/>
            <person name="Ouyang S."/>
            <person name="Schwartz D.C."/>
            <person name="Tanaka T."/>
            <person name="Wu J."/>
            <person name="Zhou S."/>
            <person name="Childs K.L."/>
            <person name="Davidson R.M."/>
            <person name="Lin H."/>
            <person name="Quesada-Ocampo L."/>
            <person name="Vaillancourt B."/>
            <person name="Sakai H."/>
            <person name="Lee S.S."/>
            <person name="Kim J."/>
            <person name="Numa H."/>
            <person name="Itoh T."/>
            <person name="Buell C.R."/>
            <person name="Matsumoto T."/>
        </authorList>
    </citation>
    <scope>GENOME REANNOTATION</scope>
    <source>
        <strain>cv. Nipponbare</strain>
    </source>
</reference>
<reference key="5">
    <citation type="journal article" date="2005" name="PLoS Biol.">
        <title>The genomes of Oryza sativa: a history of duplications.</title>
        <authorList>
            <person name="Yu J."/>
            <person name="Wang J."/>
            <person name="Lin W."/>
            <person name="Li S."/>
            <person name="Li H."/>
            <person name="Zhou J."/>
            <person name="Ni P."/>
            <person name="Dong W."/>
            <person name="Hu S."/>
            <person name="Zeng C."/>
            <person name="Zhang J."/>
            <person name="Zhang Y."/>
            <person name="Li R."/>
            <person name="Xu Z."/>
            <person name="Li S."/>
            <person name="Li X."/>
            <person name="Zheng H."/>
            <person name="Cong L."/>
            <person name="Lin L."/>
            <person name="Yin J."/>
            <person name="Geng J."/>
            <person name="Li G."/>
            <person name="Shi J."/>
            <person name="Liu J."/>
            <person name="Lv H."/>
            <person name="Li J."/>
            <person name="Wang J."/>
            <person name="Deng Y."/>
            <person name="Ran L."/>
            <person name="Shi X."/>
            <person name="Wang X."/>
            <person name="Wu Q."/>
            <person name="Li C."/>
            <person name="Ren X."/>
            <person name="Wang J."/>
            <person name="Wang X."/>
            <person name="Li D."/>
            <person name="Liu D."/>
            <person name="Zhang X."/>
            <person name="Ji Z."/>
            <person name="Zhao W."/>
            <person name="Sun Y."/>
            <person name="Zhang Z."/>
            <person name="Bao J."/>
            <person name="Han Y."/>
            <person name="Dong L."/>
            <person name="Ji J."/>
            <person name="Chen P."/>
            <person name="Wu S."/>
            <person name="Liu J."/>
            <person name="Xiao Y."/>
            <person name="Bu D."/>
            <person name="Tan J."/>
            <person name="Yang L."/>
            <person name="Ye C."/>
            <person name="Zhang J."/>
            <person name="Xu J."/>
            <person name="Zhou Y."/>
            <person name="Yu Y."/>
            <person name="Zhang B."/>
            <person name="Zhuang S."/>
            <person name="Wei H."/>
            <person name="Liu B."/>
            <person name="Lei M."/>
            <person name="Yu H."/>
            <person name="Li Y."/>
            <person name="Xu H."/>
            <person name="Wei S."/>
            <person name="He X."/>
            <person name="Fang L."/>
            <person name="Zhang Z."/>
            <person name="Zhang Y."/>
            <person name="Huang X."/>
            <person name="Su Z."/>
            <person name="Tong W."/>
            <person name="Li J."/>
            <person name="Tong Z."/>
            <person name="Li S."/>
            <person name="Ye J."/>
            <person name="Wang L."/>
            <person name="Fang L."/>
            <person name="Lei T."/>
            <person name="Chen C.-S."/>
            <person name="Chen H.-C."/>
            <person name="Xu Z."/>
            <person name="Li H."/>
            <person name="Huang H."/>
            <person name="Zhang F."/>
            <person name="Xu H."/>
            <person name="Li N."/>
            <person name="Zhao C."/>
            <person name="Li S."/>
            <person name="Dong L."/>
            <person name="Huang Y."/>
            <person name="Li L."/>
            <person name="Xi Y."/>
            <person name="Qi Q."/>
            <person name="Li W."/>
            <person name="Zhang B."/>
            <person name="Hu W."/>
            <person name="Zhang Y."/>
            <person name="Tian X."/>
            <person name="Jiao Y."/>
            <person name="Liang X."/>
            <person name="Jin J."/>
            <person name="Gao L."/>
            <person name="Zheng W."/>
            <person name="Hao B."/>
            <person name="Liu S.-M."/>
            <person name="Wang W."/>
            <person name="Yuan L."/>
            <person name="Cao M."/>
            <person name="McDermott J."/>
            <person name="Samudrala R."/>
            <person name="Wang J."/>
            <person name="Wong G.K.-S."/>
            <person name="Yang H."/>
        </authorList>
    </citation>
    <scope>NUCLEOTIDE SEQUENCE [LARGE SCALE GENOMIC DNA]</scope>
    <source>
        <strain>cv. Nipponbare</strain>
    </source>
</reference>
<reference key="6">
    <citation type="journal article" date="2003" name="Science">
        <title>Collection, mapping, and annotation of over 28,000 cDNA clones from japonica rice.</title>
        <authorList>
            <consortium name="The rice full-length cDNA consortium"/>
        </authorList>
    </citation>
    <scope>NUCLEOTIDE SEQUENCE [LARGE SCALE MRNA]</scope>
    <source>
        <strain>cv. Nipponbare</strain>
    </source>
</reference>
<reference key="7">
    <citation type="journal article" date="2011" name="Biosci. Biotechnol. Biochem.">
        <title>Cloning and characterization of catalases from rice, Oryza sativa L.</title>
        <authorList>
            <person name="Wutipraditkul N."/>
            <person name="Boonkomrat S."/>
            <person name="Buaboocha T."/>
        </authorList>
    </citation>
    <scope>BIOPHYSICOCHEMICAL PROPERTIES</scope>
    <scope>CATALYTIC ACTIVITY</scope>
    <scope>ACTIVITY REGULATION</scope>
    <scope>TISSUE SPECIFICITY</scope>
</reference>
<reference key="8">
    <citation type="journal article" date="2011" name="Plant Cell Physiol.">
        <title>ABA controls H(2)O(2) accumulation through the induction of OsCATB in rice leaves under water stress.</title>
        <authorList>
            <person name="Ye N."/>
            <person name="Zhu G."/>
            <person name="Liu Y."/>
            <person name="Li Y."/>
            <person name="Zhang J."/>
        </authorList>
    </citation>
    <scope>INHIBITION BY WATER STRESS</scope>
    <scope>SUBCELLULAR LOCATION</scope>
    <scope>TISSUE SPECIFICITY</scope>
    <source>
        <strain>cv. Yangdao 6</strain>
    </source>
</reference>
<reference key="9">
    <citation type="journal article" date="2012" name="Plant Physiol.">
        <title>Nitric oxide and protein S-nitrosylation are integral to hydrogen peroxide-induced leaf cell death in rice.</title>
        <authorList>
            <person name="Lin A."/>
            <person name="Wang Y."/>
            <person name="Tang J."/>
            <person name="Xue P."/>
            <person name="Li C."/>
            <person name="Liu L."/>
            <person name="Hu B."/>
            <person name="Yang F."/>
            <person name="Loake G.J."/>
            <person name="Chu C."/>
        </authorList>
    </citation>
    <scope>TISSUE SPECIFICITY</scope>
</reference>
<reference key="10">
    <citation type="journal article" date="2014" name="J. Plant Biol.">
        <title>Rice CatA, CatB, and CatC are involved in environmental stress response, root growth, and photorespiration, respectively.</title>
        <authorList>
            <person name="Joo J."/>
            <person name="Lee Y.H."/>
            <person name="Song S.I."/>
        </authorList>
    </citation>
    <scope>FUNCTION</scope>
    <scope>INDUCTION BY LIGHT</scope>
    <scope>REPRESSION BY ABIOTIC STRESSES</scope>
    <scope>TISSUE SPECIFICITY</scope>
</reference>
<reference key="11">
    <citation type="journal article" date="2015" name="J. Hazard. Mater.">
        <title>Nitric oxide ameliorates zinc oxide nanoparticles-induced phytotoxicity in rice seedlings.</title>
        <authorList>
            <person name="Chen J."/>
            <person name="Liu X."/>
            <person name="Wang C."/>
            <person name="Yin S.-S."/>
            <person name="Li X.-L."/>
            <person name="Hu W.-J."/>
            <person name="Simon M."/>
            <person name="Shen Z.-J."/>
            <person name="Xiao Q."/>
            <person name="Chu C.-C."/>
            <person name="Peng X.-X."/>
            <person name="Zheng H.-L."/>
        </authorList>
    </citation>
    <scope>INDUCTION BY ZINC OXIDE NANOPARTICLES</scope>
    <source>
        <strain>cv. Jiafuzhan</strain>
    </source>
</reference>
<reference key="12">
    <citation type="journal article" date="2016" name="Mol. Plant">
        <title>Association-dissociation of glycolate oxidase with catalase in rice: a potential switch to modulate intracellular H2O2 levels.</title>
        <authorList>
            <person name="Zhang Z."/>
            <person name="Xu Y."/>
            <person name="Xie Z."/>
            <person name="Li X."/>
            <person name="He Z.-H."/>
            <person name="Peng X.-X."/>
        </authorList>
    </citation>
    <scope>TISSUE SPECIFICITY</scope>
    <scope>SUBCELLULAR LOCATION</scope>
    <source>
        <strain>cv. Zhonghua 11</strain>
    </source>
</reference>
<reference key="13">
    <citation type="journal article" date="2016" name="Sci. Rep.">
        <title>The rice thylakoid membrane-bound ascorbate peroxidase OsAPX8 functions in tolerance to bacterial blight.</title>
        <authorList>
            <person name="Jiang G."/>
            <person name="Yin D."/>
            <person name="Zhao J."/>
            <person name="Chen H."/>
            <person name="Guo L."/>
            <person name="Zhu L."/>
            <person name="Zhai W."/>
        </authorList>
    </citation>
    <scope>INDUCTION BY XANTHOMONAS ORYZAE</scope>
</reference>
<reference key="14">
    <citation type="journal article" date="2017" name="Plant Sci.">
        <title>OsMYB45 plays an important role in rice resistance to cadmium stress.</title>
        <authorList>
            <person name="Hu S."/>
            <person name="Yu Y."/>
            <person name="Chen Q."/>
            <person name="Mu G."/>
            <person name="Shen Z."/>
            <person name="Zheng L."/>
        </authorList>
    </citation>
    <scope>TISSUE SPECIFICITY</scope>
</reference>
<reference key="15">
    <citation type="journal article" date="2018" name="Plant Cell">
        <title>The receptor-like cytoplasmic kinase STRK1 phosphorylates and activates CatC, thereby regulating H2O2 homeostasis and improving salt tolerance in rice.</title>
        <authorList>
            <person name="Zhou Y.-B."/>
            <person name="Liu C."/>
            <person name="Tang D.-Y."/>
            <person name="Yan L."/>
            <person name="Wang D."/>
            <person name="Yang Y.-Z."/>
            <person name="Gui J.-S."/>
            <person name="Zhao X.-Y."/>
            <person name="Li L.-G."/>
            <person name="Tang X.-D."/>
            <person name="Yu F."/>
            <person name="Li J.-L."/>
            <person name="Liu L.-L."/>
            <person name="Zhu Y.-H."/>
            <person name="Lin J.-Z."/>
            <person name="Liu X.-M."/>
        </authorList>
    </citation>
    <scope>INTERACTION WITH STRK1</scope>
    <scope>SUBCELLULAR LOCATION</scope>
    <source>
        <strain>cv. Kitaake</strain>
    </source>
</reference>
<reference key="16">
    <citation type="journal article" date="2018" name="Plant Cell Rep.">
        <title>Involvement of CAT in the detoxification of HT-induced ROS burst in rice anther and its relation to pollen fertility.</title>
        <authorList>
            <person name="Zhao Q."/>
            <person name="Zhou L."/>
            <person name="Liu J."/>
            <person name="Cao Z."/>
            <person name="Du X."/>
            <person name="Huang F."/>
            <person name="Pan G."/>
            <person name="Cheng F."/>
        </authorList>
    </citation>
    <scope>INDUCTION BY HEAT STRESS</scope>
    <scope>TISSUE SPECIFICITY</scope>
    <source>
        <strain>cv. Qianjiang3</strain>
        <strain>cv. Xieqingzao</strain>
    </source>
</reference>
<sequence length="492" mass="56698">MDPCKFRPSSSFDTKTTTTNAGAPVWNDNEALTVGPRGPILLEDYHLIEKVAHFARERIPERVVHARGASAKGFFECTHDVTDITCADFLRSPGAQTPVIVRFSTVIHERGSPETIRDPRGFAVKFYTREGNWDLLGNNFPVFFIRDGIKFPDVIHAFKPNPRSHVQEYWRVFDFLSHHPESLHTFFFLFDDVGIPTDYRHMDGFGVNTYTFVTRDAKARYVKFHWKPTCGVSCLMDDEATLVGGKNHSHATQDLYDSIAAGNFPEWKLFVQVIDPEEEERFDFDPLDDTKTWPEDEVPLRPVGRLVLNRNVDNFFNENEQLAFGPGLVVPGIYYSDDKMLQCRVFAYADTQRYRLGPNYLMLPVNAPKCAHHNNHYDGAMNFMHRDEEVDYYPSRHAPLRHAPPTPITPRPVVGRRQKATIHKQNDFKQPGERYRSWAPDRQERFIRRFAGELAHPKVSPELRAIWVNYLSQCDESLGVKIANRLNVKPSM</sequence>
<feature type="chain" id="PRO_0000084952" description="Catalase isozyme A">
    <location>
        <begin position="1"/>
        <end position="492"/>
    </location>
</feature>
<feature type="region of interest" description="Disordered" evidence="5">
    <location>
        <begin position="1"/>
        <end position="23"/>
    </location>
</feature>
<feature type="compositionally biased region" description="Polar residues" evidence="5">
    <location>
        <begin position="8"/>
        <end position="21"/>
    </location>
</feature>
<feature type="active site" evidence="4">
    <location>
        <position position="65"/>
    </location>
</feature>
<feature type="active site" evidence="3">
    <location>
        <position position="138"/>
    </location>
</feature>
<feature type="binding site" evidence="3">
    <location>
        <position position="62"/>
    </location>
    <ligand>
        <name>heme</name>
        <dbReference type="ChEBI" id="CHEBI:30413"/>
    </ligand>
</feature>
<feature type="binding site" evidence="3">
    <location>
        <position position="102"/>
    </location>
    <ligand>
        <name>heme</name>
        <dbReference type="ChEBI" id="CHEBI:30413"/>
    </ligand>
</feature>
<feature type="binding site" evidence="3">
    <location>
        <position position="151"/>
    </location>
    <ligand>
        <name>heme</name>
        <dbReference type="ChEBI" id="CHEBI:30413"/>
    </ligand>
</feature>
<feature type="binding site" evidence="3">
    <location>
        <position position="344"/>
    </location>
    <ligand>
        <name>heme</name>
        <dbReference type="ChEBI" id="CHEBI:30413"/>
    </ligand>
</feature>
<feature type="binding site" description="axial binding residue" evidence="3">
    <location>
        <position position="348"/>
    </location>
    <ligand>
        <name>heme</name>
        <dbReference type="ChEBI" id="CHEBI:30413"/>
    </ligand>
    <ligandPart>
        <name>Fe</name>
        <dbReference type="ChEBI" id="CHEBI:18248"/>
    </ligandPart>
</feature>
<feature type="binding site" evidence="3">
    <location>
        <position position="355"/>
    </location>
    <ligand>
        <name>heme</name>
        <dbReference type="ChEBI" id="CHEBI:30413"/>
    </ligand>
</feature>
<feature type="modified residue" description="Phosphotyrosine" evidence="1">
    <location>
        <position position="210"/>
    </location>
</feature>
<feature type="sequence conflict" description="In Ref. 1; BAA06232." evidence="16" ref="1">
    <original>RRFAGEL</original>
    <variation>PLRRRV</variation>
    <location>
        <begin position="448"/>
        <end position="454"/>
    </location>
</feature>
<evidence type="ECO:0000250" key="1">
    <source>
        <dbReference type="UniProtKB" id="Q10S82"/>
    </source>
</evidence>
<evidence type="ECO:0000250" key="2">
    <source>
        <dbReference type="UniProtKB" id="Q55DH8"/>
    </source>
</evidence>
<evidence type="ECO:0000250" key="3">
    <source>
        <dbReference type="UniProtKB" id="Q9C168"/>
    </source>
</evidence>
<evidence type="ECO:0000255" key="4">
    <source>
        <dbReference type="PROSITE-ProRule" id="PRU10013"/>
    </source>
</evidence>
<evidence type="ECO:0000256" key="5">
    <source>
        <dbReference type="SAM" id="MobiDB-lite"/>
    </source>
</evidence>
<evidence type="ECO:0000269" key="6">
    <source>
    </source>
</evidence>
<evidence type="ECO:0000269" key="7">
    <source>
    </source>
</evidence>
<evidence type="ECO:0000269" key="8">
    <source>
    </source>
</evidence>
<evidence type="ECO:0000269" key="9">
    <source>
    </source>
</evidence>
<evidence type="ECO:0000269" key="10">
    <source>
    </source>
</evidence>
<evidence type="ECO:0000269" key="11">
    <source>
    </source>
</evidence>
<evidence type="ECO:0000269" key="12">
    <source>
    </source>
</evidence>
<evidence type="ECO:0000269" key="13">
    <source>
    </source>
</evidence>
<evidence type="ECO:0000269" key="14">
    <source>
    </source>
</evidence>
<evidence type="ECO:0000269" key="15">
    <source ref="10"/>
</evidence>
<evidence type="ECO:0000305" key="16"/>
<evidence type="ECO:0000305" key="17">
    <source>
    </source>
</evidence>
<accession>Q0E4K1</accession>
<accession>A3A2F1</accession>
<accession>P29611</accession>
<accession>Q6Z7B2</accession>
<proteinExistence type="evidence at protein level"/>
<organism>
    <name type="scientific">Oryza sativa subsp. japonica</name>
    <name type="common">Rice</name>
    <dbReference type="NCBI Taxonomy" id="39947"/>
    <lineage>
        <taxon>Eukaryota</taxon>
        <taxon>Viridiplantae</taxon>
        <taxon>Streptophyta</taxon>
        <taxon>Embryophyta</taxon>
        <taxon>Tracheophyta</taxon>
        <taxon>Spermatophyta</taxon>
        <taxon>Magnoliopsida</taxon>
        <taxon>Liliopsida</taxon>
        <taxon>Poales</taxon>
        <taxon>Poaceae</taxon>
        <taxon>BOP clade</taxon>
        <taxon>Oryzoideae</taxon>
        <taxon>Oryzeae</taxon>
        <taxon>Oryzinae</taxon>
        <taxon>Oryza</taxon>
        <taxon>Oryza sativa</taxon>
    </lineage>
</organism>